<sequence>MKLRWFAFLIVLLAGCSSKHDYTNPPWNAKVPVQRAMQWMPISQKAGAAWGVDPQLITAIIAIESGGNPNAVSKSNAIGLMQLKASTSGRDVYRRMGWSGEPTTSELKNPERNISMGAAYLNILETGPLAGIEDPKVLQYALVVSYANGAGALLRTFSSDRKKAISKINDLDADEFLDHVARNHPAPQAPRYIYKLEQALDAM</sequence>
<gene>
    <name evidence="1" type="primary">emtA</name>
    <name type="ordered locus">ECH74115_1680</name>
</gene>
<evidence type="ECO:0000255" key="1">
    <source>
        <dbReference type="HAMAP-Rule" id="MF_01381"/>
    </source>
</evidence>
<feature type="signal peptide" evidence="1">
    <location>
        <begin position="1"/>
        <end position="15"/>
    </location>
</feature>
<feature type="chain" id="PRO_1000144950" description="Endo-type membrane-bound lytic murein transglycosylase A">
    <location>
        <begin position="16"/>
        <end position="203"/>
    </location>
</feature>
<feature type="lipid moiety-binding region" description="N-palmitoyl cysteine" evidence="1">
    <location>
        <position position="16"/>
    </location>
</feature>
<feature type="lipid moiety-binding region" description="S-diacylglycerol cysteine" evidence="1">
    <location>
        <position position="16"/>
    </location>
</feature>
<accession>B5YXL7</accession>
<comment type="function">
    <text evidence="1">Murein-degrading enzyme. May play a role in recycling of muropeptides during cell elongation and/or cell division. Preferentially cleaves at a distance of more than two disaccharide units from the ends of the glycan chain.</text>
</comment>
<comment type="catalytic activity">
    <reaction evidence="1">
        <text>Endolytic cleavage of the (1-&gt;4)-beta-glycosidic linkage between N-acetylmuramic acid (MurNAc) and N-acetylglucosamine (GlcNAc) residues in peptidoglycan with concomitant formation of a 1,6-anhydrobond in the MurNAc residue.</text>
        <dbReference type="EC" id="4.2.2.n2"/>
    </reaction>
</comment>
<comment type="subcellular location">
    <subcellularLocation>
        <location evidence="1">Cell outer membrane</location>
        <topology evidence="1">Lipid-anchor</topology>
    </subcellularLocation>
</comment>
<comment type="similarity">
    <text evidence="1">Belongs to the transglycosylase Slt family.</text>
</comment>
<proteinExistence type="inferred from homology"/>
<organism>
    <name type="scientific">Escherichia coli O157:H7 (strain EC4115 / EHEC)</name>
    <dbReference type="NCBI Taxonomy" id="444450"/>
    <lineage>
        <taxon>Bacteria</taxon>
        <taxon>Pseudomonadati</taxon>
        <taxon>Pseudomonadota</taxon>
        <taxon>Gammaproteobacteria</taxon>
        <taxon>Enterobacterales</taxon>
        <taxon>Enterobacteriaceae</taxon>
        <taxon>Escherichia</taxon>
    </lineage>
</organism>
<protein>
    <recommendedName>
        <fullName evidence="1">Endo-type membrane-bound lytic murein transglycosylase A</fullName>
        <ecNumber evidence="1">4.2.2.n2</ecNumber>
    </recommendedName>
    <alternativeName>
        <fullName evidence="1">Peptidoglycan lytic endotransglycosylase</fullName>
    </alternativeName>
</protein>
<name>EMTA_ECO5E</name>
<keyword id="KW-0998">Cell outer membrane</keyword>
<keyword id="KW-0961">Cell wall biogenesis/degradation</keyword>
<keyword id="KW-0449">Lipoprotein</keyword>
<keyword id="KW-0456">Lyase</keyword>
<keyword id="KW-0472">Membrane</keyword>
<keyword id="KW-0564">Palmitate</keyword>
<keyword id="KW-0732">Signal</keyword>
<reference key="1">
    <citation type="journal article" date="2011" name="Proc. Natl. Acad. Sci. U.S.A.">
        <title>Genomic anatomy of Escherichia coli O157:H7 outbreaks.</title>
        <authorList>
            <person name="Eppinger M."/>
            <person name="Mammel M.K."/>
            <person name="Leclerc J.E."/>
            <person name="Ravel J."/>
            <person name="Cebula T.A."/>
        </authorList>
    </citation>
    <scope>NUCLEOTIDE SEQUENCE [LARGE SCALE GENOMIC DNA]</scope>
    <source>
        <strain>EC4115 / EHEC</strain>
    </source>
</reference>
<dbReference type="EC" id="4.2.2.n2" evidence="1"/>
<dbReference type="EMBL" id="CP001164">
    <property type="protein sequence ID" value="ACI39566.1"/>
    <property type="molecule type" value="Genomic_DNA"/>
</dbReference>
<dbReference type="RefSeq" id="WP_001295616.1">
    <property type="nucleotide sequence ID" value="NC_011353.1"/>
</dbReference>
<dbReference type="SMR" id="B5YXL7"/>
<dbReference type="CAZy" id="GH23">
    <property type="family name" value="Glycoside Hydrolase Family 23"/>
</dbReference>
<dbReference type="GeneID" id="75171299"/>
<dbReference type="KEGG" id="ecf:ECH74115_1680"/>
<dbReference type="HOGENOM" id="CLU_103257_0_0_6"/>
<dbReference type="GO" id="GO:0009279">
    <property type="term" value="C:cell outer membrane"/>
    <property type="evidence" value="ECO:0007669"/>
    <property type="project" value="UniProtKB-SubCell"/>
</dbReference>
<dbReference type="GO" id="GO:0008932">
    <property type="term" value="F:lytic endotransglycosylase activity"/>
    <property type="evidence" value="ECO:0007669"/>
    <property type="project" value="InterPro"/>
</dbReference>
<dbReference type="GO" id="GO:0016998">
    <property type="term" value="P:cell wall macromolecule catabolic process"/>
    <property type="evidence" value="ECO:0007669"/>
    <property type="project" value="UniProtKB-UniRule"/>
</dbReference>
<dbReference type="GO" id="GO:0071555">
    <property type="term" value="P:cell wall organization"/>
    <property type="evidence" value="ECO:0007669"/>
    <property type="project" value="UniProtKB-KW"/>
</dbReference>
<dbReference type="GO" id="GO:0000270">
    <property type="term" value="P:peptidoglycan metabolic process"/>
    <property type="evidence" value="ECO:0007669"/>
    <property type="project" value="InterPro"/>
</dbReference>
<dbReference type="CDD" id="cd16893">
    <property type="entry name" value="LT_MltC_MltE"/>
    <property type="match status" value="1"/>
</dbReference>
<dbReference type="FunFam" id="1.10.530.10:FF:000007">
    <property type="entry name" value="Endo-type membrane-bound lytic murein transglycosylase A"/>
    <property type="match status" value="1"/>
</dbReference>
<dbReference type="Gene3D" id="1.10.530.10">
    <property type="match status" value="1"/>
</dbReference>
<dbReference type="HAMAP" id="MF_01381">
    <property type="entry name" value="EmtA"/>
    <property type="match status" value="1"/>
</dbReference>
<dbReference type="InterPro" id="IPR023946">
    <property type="entry name" value="EmtA"/>
</dbReference>
<dbReference type="InterPro" id="IPR023346">
    <property type="entry name" value="Lysozyme-like_dom_sf"/>
</dbReference>
<dbReference type="InterPro" id="IPR000189">
    <property type="entry name" value="Transglyc_AS"/>
</dbReference>
<dbReference type="InterPro" id="IPR008258">
    <property type="entry name" value="Transglycosylase_SLT_dom_1"/>
</dbReference>
<dbReference type="NCBIfam" id="NF012014">
    <property type="entry name" value="PRK15470.1"/>
    <property type="match status" value="1"/>
</dbReference>
<dbReference type="PANTHER" id="PTHR37423:SF4">
    <property type="entry name" value="ENDO-TYPE MEMBRANE-BOUND LYTIC MUREIN TRANSGLYCOSYLASE A"/>
    <property type="match status" value="1"/>
</dbReference>
<dbReference type="PANTHER" id="PTHR37423">
    <property type="entry name" value="SOLUBLE LYTIC MUREIN TRANSGLYCOSYLASE-RELATED"/>
    <property type="match status" value="1"/>
</dbReference>
<dbReference type="Pfam" id="PF01464">
    <property type="entry name" value="SLT"/>
    <property type="match status" value="1"/>
</dbReference>
<dbReference type="SUPFAM" id="SSF53955">
    <property type="entry name" value="Lysozyme-like"/>
    <property type="match status" value="1"/>
</dbReference>
<dbReference type="PROSITE" id="PS51257">
    <property type="entry name" value="PROKAR_LIPOPROTEIN"/>
    <property type="match status" value="1"/>
</dbReference>
<dbReference type="PROSITE" id="PS00922">
    <property type="entry name" value="TRANSGLYCOSYLASE"/>
    <property type="match status" value="1"/>
</dbReference>